<comment type="subcellular location">
    <subcellularLocation>
        <location evidence="4 5">Cell membrane</location>
        <topology evidence="3">Multi-pass membrane protein</topology>
    </subcellularLocation>
    <subcellularLocation>
        <location evidence="4 5">Membrane raft</location>
        <topology evidence="1">Multi-pass membrane protein</topology>
    </subcellularLocation>
    <text evidence="4 5">Present in detergent-resistant membrane (DRM) fractions that may be equivalent to eukaryotic membrane rafts; these rafts include proteins involved in signaling, molecule trafficking and protein secretion.</text>
</comment>
<comment type="similarity">
    <text evidence="6">Belongs to the ABC transporter superfamily.</text>
</comment>
<sequence>MLRQFFSYYKPYKTLFFLDFFSAIAGGLMELSFPLIVNYFIDTLLPGRDWGLIIATSIGLFAVYALSSALQYIVTYWGHMLGINIETDMRKSLFDHLQKLSFKFYDNNKTGTLMSKLTNDLMYIGEVAHHGPEDLFIAVMTILGAFGVMLFINWQLALLTFIIMPIVIWLALYFNKKMTKAFTTLNKDIGDFSARVENNIGGIRLVQAFGNEAFEKERFAVNNQRFRVTKLSSYKIMAKNGSISYMLTRFVTLFVLLCGTWFVIRGSLSYGEFVAFVLLTNVLFRPIDKINAIIEMYPRGIAGFKSYMELMETEPDIQDSPDSKDVSGLKGNIRYKHVSFGYDDHHNVLNDINLSIQAGETVAFVGPSGAGKSTLCSLLPRFYEASEGDITIDGISIKDMTLSSLRGQIGVVQQDVFLFSGTLRENIAYGRLGASEEDIWQAVKQAHLEELVHNMPDGLDTMIGERGVKLSGGQKQRLSIARMFLKNPSILILDEATSALDTETEAAIQKALQELSEGRTTLVIAHRLATIKDADRIVVVTNNGIEEQGRHQDLIEAGGLYSRLHQAQFGQMVHR</sequence>
<feature type="chain" id="PRO_0000093149" description="Uncharacterized ABC transporter ATP-binding protein YwjA">
    <location>
        <begin position="1"/>
        <end position="575"/>
    </location>
</feature>
<feature type="transmembrane region" description="Helical" evidence="3">
    <location>
        <begin position="16"/>
        <end position="36"/>
    </location>
</feature>
<feature type="transmembrane region" description="Helical" evidence="3">
    <location>
        <begin position="50"/>
        <end position="70"/>
    </location>
</feature>
<feature type="transmembrane region" description="Helical" evidence="3">
    <location>
        <begin position="132"/>
        <end position="152"/>
    </location>
</feature>
<feature type="transmembrane region" description="Helical" evidence="3">
    <location>
        <begin position="154"/>
        <end position="174"/>
    </location>
</feature>
<feature type="transmembrane region" description="Helical" evidence="3">
    <location>
        <begin position="243"/>
        <end position="263"/>
    </location>
</feature>
<feature type="transmembrane region" description="Helical" evidence="3">
    <location>
        <begin position="264"/>
        <end position="284"/>
    </location>
</feature>
<feature type="domain" description="ABC transmembrane type-1" evidence="3">
    <location>
        <begin position="16"/>
        <end position="299"/>
    </location>
</feature>
<feature type="domain" description="ABC transporter" evidence="2">
    <location>
        <begin position="333"/>
        <end position="567"/>
    </location>
</feature>
<feature type="binding site" evidence="2">
    <location>
        <begin position="366"/>
        <end position="373"/>
    </location>
    <ligand>
        <name>ATP</name>
        <dbReference type="ChEBI" id="CHEBI:30616"/>
    </ligand>
</feature>
<reference key="1">
    <citation type="journal article" date="1997" name="Microbiology">
        <title>The Bacillus subtilis genome from gerBC (311 degrees) to licR (334 degrees).</title>
        <authorList>
            <person name="Presecan E."/>
            <person name="Moszer I."/>
            <person name="Boursier L."/>
            <person name="Cruz Ramos H."/>
            <person name="De La Fuente V."/>
            <person name="Hullo M.-F."/>
            <person name="Lelong C."/>
            <person name="Schleich S."/>
            <person name="Sekowska A."/>
            <person name="Song B.H."/>
            <person name="Villani G."/>
            <person name="Kunst F."/>
            <person name="Danchin A."/>
            <person name="Glaser P."/>
        </authorList>
    </citation>
    <scope>NUCLEOTIDE SEQUENCE [GENOMIC DNA]</scope>
    <source>
        <strain>168</strain>
    </source>
</reference>
<reference key="2">
    <citation type="journal article" date="1997" name="Nature">
        <title>The complete genome sequence of the Gram-positive bacterium Bacillus subtilis.</title>
        <authorList>
            <person name="Kunst F."/>
            <person name="Ogasawara N."/>
            <person name="Moszer I."/>
            <person name="Albertini A.M."/>
            <person name="Alloni G."/>
            <person name="Azevedo V."/>
            <person name="Bertero M.G."/>
            <person name="Bessieres P."/>
            <person name="Bolotin A."/>
            <person name="Borchert S."/>
            <person name="Borriss R."/>
            <person name="Boursier L."/>
            <person name="Brans A."/>
            <person name="Braun M."/>
            <person name="Brignell S.C."/>
            <person name="Bron S."/>
            <person name="Brouillet S."/>
            <person name="Bruschi C.V."/>
            <person name="Caldwell B."/>
            <person name="Capuano V."/>
            <person name="Carter N.M."/>
            <person name="Choi S.-K."/>
            <person name="Codani J.-J."/>
            <person name="Connerton I.F."/>
            <person name="Cummings N.J."/>
            <person name="Daniel R.A."/>
            <person name="Denizot F."/>
            <person name="Devine K.M."/>
            <person name="Duesterhoeft A."/>
            <person name="Ehrlich S.D."/>
            <person name="Emmerson P.T."/>
            <person name="Entian K.-D."/>
            <person name="Errington J."/>
            <person name="Fabret C."/>
            <person name="Ferrari E."/>
            <person name="Foulger D."/>
            <person name="Fritz C."/>
            <person name="Fujita M."/>
            <person name="Fujita Y."/>
            <person name="Fuma S."/>
            <person name="Galizzi A."/>
            <person name="Galleron N."/>
            <person name="Ghim S.-Y."/>
            <person name="Glaser P."/>
            <person name="Goffeau A."/>
            <person name="Golightly E.J."/>
            <person name="Grandi G."/>
            <person name="Guiseppi G."/>
            <person name="Guy B.J."/>
            <person name="Haga K."/>
            <person name="Haiech J."/>
            <person name="Harwood C.R."/>
            <person name="Henaut A."/>
            <person name="Hilbert H."/>
            <person name="Holsappel S."/>
            <person name="Hosono S."/>
            <person name="Hullo M.-F."/>
            <person name="Itaya M."/>
            <person name="Jones L.-M."/>
            <person name="Joris B."/>
            <person name="Karamata D."/>
            <person name="Kasahara Y."/>
            <person name="Klaerr-Blanchard M."/>
            <person name="Klein C."/>
            <person name="Kobayashi Y."/>
            <person name="Koetter P."/>
            <person name="Koningstein G."/>
            <person name="Krogh S."/>
            <person name="Kumano M."/>
            <person name="Kurita K."/>
            <person name="Lapidus A."/>
            <person name="Lardinois S."/>
            <person name="Lauber J."/>
            <person name="Lazarevic V."/>
            <person name="Lee S.-M."/>
            <person name="Levine A."/>
            <person name="Liu H."/>
            <person name="Masuda S."/>
            <person name="Mauel C."/>
            <person name="Medigue C."/>
            <person name="Medina N."/>
            <person name="Mellado R.P."/>
            <person name="Mizuno M."/>
            <person name="Moestl D."/>
            <person name="Nakai S."/>
            <person name="Noback M."/>
            <person name="Noone D."/>
            <person name="O'Reilly M."/>
            <person name="Ogawa K."/>
            <person name="Ogiwara A."/>
            <person name="Oudega B."/>
            <person name="Park S.-H."/>
            <person name="Parro V."/>
            <person name="Pohl T.M."/>
            <person name="Portetelle D."/>
            <person name="Porwollik S."/>
            <person name="Prescott A.M."/>
            <person name="Presecan E."/>
            <person name="Pujic P."/>
            <person name="Purnelle B."/>
            <person name="Rapoport G."/>
            <person name="Rey M."/>
            <person name="Reynolds S."/>
            <person name="Rieger M."/>
            <person name="Rivolta C."/>
            <person name="Rocha E."/>
            <person name="Roche B."/>
            <person name="Rose M."/>
            <person name="Sadaie Y."/>
            <person name="Sato T."/>
            <person name="Scanlan E."/>
            <person name="Schleich S."/>
            <person name="Schroeter R."/>
            <person name="Scoffone F."/>
            <person name="Sekiguchi J."/>
            <person name="Sekowska A."/>
            <person name="Seror S.J."/>
            <person name="Serror P."/>
            <person name="Shin B.-S."/>
            <person name="Soldo B."/>
            <person name="Sorokin A."/>
            <person name="Tacconi E."/>
            <person name="Takagi T."/>
            <person name="Takahashi H."/>
            <person name="Takemaru K."/>
            <person name="Takeuchi M."/>
            <person name="Tamakoshi A."/>
            <person name="Tanaka T."/>
            <person name="Terpstra P."/>
            <person name="Tognoni A."/>
            <person name="Tosato V."/>
            <person name="Uchiyama S."/>
            <person name="Vandenbol M."/>
            <person name="Vannier F."/>
            <person name="Vassarotti A."/>
            <person name="Viari A."/>
            <person name="Wambutt R."/>
            <person name="Wedler E."/>
            <person name="Wedler H."/>
            <person name="Weitzenegger T."/>
            <person name="Winters P."/>
            <person name="Wipat A."/>
            <person name="Yamamoto H."/>
            <person name="Yamane K."/>
            <person name="Yasumoto K."/>
            <person name="Yata K."/>
            <person name="Yoshida K."/>
            <person name="Yoshikawa H.-F."/>
            <person name="Zumstein E."/>
            <person name="Yoshikawa H."/>
            <person name="Danchin A."/>
        </authorList>
    </citation>
    <scope>NUCLEOTIDE SEQUENCE [LARGE SCALE GENOMIC DNA]</scope>
    <source>
        <strain>168</strain>
    </source>
</reference>
<reference key="3">
    <citation type="journal article" date="2010" name="Genes Dev.">
        <title>Functional microdomains in bacterial membranes.</title>
        <authorList>
            <person name="Lopez D."/>
            <person name="Kolter R."/>
        </authorList>
    </citation>
    <scope>IDENTIFICATION BY MASS SPECTROMETRY</scope>
    <scope>SUBCELLULAR LOCATION</scope>
    <source>
        <strain>168 / Marburg / ATCC 6051 / DSM 10 / JCM 1465 / NBRC 13719 / NCIMB 3610 / NRRL NRS-744 / VKM B-501</strain>
    </source>
</reference>
<reference key="4">
    <citation type="journal article" date="2012" name="Mol. Microbiol.">
        <title>The biofilm formation defect of a Bacillus subtilis flotillin-defective mutant involves the protease FtsH.</title>
        <authorList>
            <person name="Yepes A."/>
            <person name="Schneider J."/>
            <person name="Mielich B."/>
            <person name="Koch G."/>
            <person name="Garcia-Betancur J.C."/>
            <person name="Ramamurthi K.S."/>
            <person name="Vlamakis H."/>
            <person name="Lopez D."/>
        </authorList>
    </citation>
    <scope>SUBCELLULAR LOCATION</scope>
    <source>
        <strain>168 / Marburg / ATCC 6051 / DSM 10 / JCM 1465 / NBRC 13719 / NCIMB 3610 / NRRL NRS-744 / VKM B-501</strain>
    </source>
</reference>
<keyword id="KW-0067">ATP-binding</keyword>
<keyword id="KW-1003">Cell membrane</keyword>
<keyword id="KW-0472">Membrane</keyword>
<keyword id="KW-0547">Nucleotide-binding</keyword>
<keyword id="KW-1185">Reference proteome</keyword>
<keyword id="KW-0812">Transmembrane</keyword>
<keyword id="KW-1133">Transmembrane helix</keyword>
<keyword id="KW-0813">Transport</keyword>
<protein>
    <recommendedName>
        <fullName>Uncharacterized ABC transporter ATP-binding protein YwjA</fullName>
    </recommendedName>
</protein>
<evidence type="ECO:0000255" key="1"/>
<evidence type="ECO:0000255" key="2">
    <source>
        <dbReference type="PROSITE-ProRule" id="PRU00434"/>
    </source>
</evidence>
<evidence type="ECO:0000255" key="3">
    <source>
        <dbReference type="PROSITE-ProRule" id="PRU00441"/>
    </source>
</evidence>
<evidence type="ECO:0000269" key="4">
    <source>
    </source>
</evidence>
<evidence type="ECO:0000269" key="5">
    <source>
    </source>
</evidence>
<evidence type="ECO:0000305" key="6"/>
<organism>
    <name type="scientific">Bacillus subtilis (strain 168)</name>
    <dbReference type="NCBI Taxonomy" id="224308"/>
    <lineage>
        <taxon>Bacteria</taxon>
        <taxon>Bacillati</taxon>
        <taxon>Bacillota</taxon>
        <taxon>Bacilli</taxon>
        <taxon>Bacillales</taxon>
        <taxon>Bacillaceae</taxon>
        <taxon>Bacillus</taxon>
    </lineage>
</organism>
<dbReference type="EMBL" id="Z49782">
    <property type="protein sequence ID" value="CAA89862.1"/>
    <property type="molecule type" value="Genomic_DNA"/>
</dbReference>
<dbReference type="EMBL" id="AL009126">
    <property type="protein sequence ID" value="CAB15751.1"/>
    <property type="molecule type" value="Genomic_DNA"/>
</dbReference>
<dbReference type="PIR" id="S55415">
    <property type="entry name" value="S55415"/>
</dbReference>
<dbReference type="RefSeq" id="NP_391604.1">
    <property type="nucleotide sequence ID" value="NC_000964.3"/>
</dbReference>
<dbReference type="RefSeq" id="WP_009968321.1">
    <property type="nucleotide sequence ID" value="NZ_OZ025638.1"/>
</dbReference>
<dbReference type="SMR" id="P45861"/>
<dbReference type="FunCoup" id="P45861">
    <property type="interactions" value="418"/>
</dbReference>
<dbReference type="STRING" id="224308.BSU37230"/>
<dbReference type="jPOST" id="P45861"/>
<dbReference type="PaxDb" id="224308-BSU37230"/>
<dbReference type="EnsemblBacteria" id="CAB15751">
    <property type="protein sequence ID" value="CAB15751"/>
    <property type="gene ID" value="BSU_37230"/>
</dbReference>
<dbReference type="GeneID" id="937049"/>
<dbReference type="KEGG" id="bsu:BSU37230"/>
<dbReference type="PATRIC" id="fig|224308.179.peg.4033"/>
<dbReference type="eggNOG" id="COG1132">
    <property type="taxonomic scope" value="Bacteria"/>
</dbReference>
<dbReference type="InParanoid" id="P45861"/>
<dbReference type="OrthoDB" id="9770415at2"/>
<dbReference type="PhylomeDB" id="P45861"/>
<dbReference type="BioCyc" id="BSUB:BSU37230-MONOMER"/>
<dbReference type="Proteomes" id="UP000001570">
    <property type="component" value="Chromosome"/>
</dbReference>
<dbReference type="GO" id="GO:0045121">
    <property type="term" value="C:membrane raft"/>
    <property type="evidence" value="ECO:0007669"/>
    <property type="project" value="UniProtKB-SubCell"/>
</dbReference>
<dbReference type="GO" id="GO:0005886">
    <property type="term" value="C:plasma membrane"/>
    <property type="evidence" value="ECO:0007669"/>
    <property type="project" value="UniProtKB-SubCell"/>
</dbReference>
<dbReference type="GO" id="GO:0140359">
    <property type="term" value="F:ABC-type transporter activity"/>
    <property type="evidence" value="ECO:0007669"/>
    <property type="project" value="InterPro"/>
</dbReference>
<dbReference type="GO" id="GO:0005524">
    <property type="term" value="F:ATP binding"/>
    <property type="evidence" value="ECO:0007669"/>
    <property type="project" value="UniProtKB-KW"/>
</dbReference>
<dbReference type="GO" id="GO:0016887">
    <property type="term" value="F:ATP hydrolysis activity"/>
    <property type="evidence" value="ECO:0007669"/>
    <property type="project" value="InterPro"/>
</dbReference>
<dbReference type="GO" id="GO:0034040">
    <property type="term" value="F:ATPase-coupled lipid transmembrane transporter activity"/>
    <property type="evidence" value="ECO:0000318"/>
    <property type="project" value="GO_Central"/>
</dbReference>
<dbReference type="GO" id="GO:0055085">
    <property type="term" value="P:transmembrane transport"/>
    <property type="evidence" value="ECO:0000318"/>
    <property type="project" value="GO_Central"/>
</dbReference>
<dbReference type="CDD" id="cd18549">
    <property type="entry name" value="ABC_6TM_YwjA_like"/>
    <property type="match status" value="1"/>
</dbReference>
<dbReference type="CDD" id="cd03251">
    <property type="entry name" value="ABCC_MsbA"/>
    <property type="match status" value="1"/>
</dbReference>
<dbReference type="FunFam" id="1.20.1560.10:FF:000053">
    <property type="entry name" value="Multidrug ABC transporter ATP-binding protein"/>
    <property type="match status" value="1"/>
</dbReference>
<dbReference type="FunFam" id="3.40.50.300:FF:000218">
    <property type="entry name" value="Multidrug ABC transporter ATP-binding protein"/>
    <property type="match status" value="1"/>
</dbReference>
<dbReference type="Gene3D" id="1.20.1560.10">
    <property type="entry name" value="ABC transporter type 1, transmembrane domain"/>
    <property type="match status" value="1"/>
</dbReference>
<dbReference type="Gene3D" id="3.40.50.300">
    <property type="entry name" value="P-loop containing nucleotide triphosphate hydrolases"/>
    <property type="match status" value="1"/>
</dbReference>
<dbReference type="InterPro" id="IPR003593">
    <property type="entry name" value="AAA+_ATPase"/>
</dbReference>
<dbReference type="InterPro" id="IPR011527">
    <property type="entry name" value="ABC1_TM_dom"/>
</dbReference>
<dbReference type="InterPro" id="IPR036640">
    <property type="entry name" value="ABC1_TM_sf"/>
</dbReference>
<dbReference type="InterPro" id="IPR003439">
    <property type="entry name" value="ABC_transporter-like_ATP-bd"/>
</dbReference>
<dbReference type="InterPro" id="IPR017871">
    <property type="entry name" value="ABC_transporter-like_CS"/>
</dbReference>
<dbReference type="InterPro" id="IPR027417">
    <property type="entry name" value="P-loop_NTPase"/>
</dbReference>
<dbReference type="InterPro" id="IPR039421">
    <property type="entry name" value="Type_1_exporter"/>
</dbReference>
<dbReference type="PANTHER" id="PTHR43394:SF1">
    <property type="entry name" value="ATP-BINDING CASSETTE SUB-FAMILY B MEMBER 10, MITOCHONDRIAL"/>
    <property type="match status" value="1"/>
</dbReference>
<dbReference type="PANTHER" id="PTHR43394">
    <property type="entry name" value="ATP-DEPENDENT PERMEASE MDL1, MITOCHONDRIAL"/>
    <property type="match status" value="1"/>
</dbReference>
<dbReference type="Pfam" id="PF00664">
    <property type="entry name" value="ABC_membrane"/>
    <property type="match status" value="1"/>
</dbReference>
<dbReference type="Pfam" id="PF00005">
    <property type="entry name" value="ABC_tran"/>
    <property type="match status" value="1"/>
</dbReference>
<dbReference type="SMART" id="SM00382">
    <property type="entry name" value="AAA"/>
    <property type="match status" value="1"/>
</dbReference>
<dbReference type="SUPFAM" id="SSF90123">
    <property type="entry name" value="ABC transporter transmembrane region"/>
    <property type="match status" value="1"/>
</dbReference>
<dbReference type="SUPFAM" id="SSF52540">
    <property type="entry name" value="P-loop containing nucleoside triphosphate hydrolases"/>
    <property type="match status" value="1"/>
</dbReference>
<dbReference type="PROSITE" id="PS50929">
    <property type="entry name" value="ABC_TM1F"/>
    <property type="match status" value="1"/>
</dbReference>
<dbReference type="PROSITE" id="PS00211">
    <property type="entry name" value="ABC_TRANSPORTER_1"/>
    <property type="match status" value="2"/>
</dbReference>
<dbReference type="PROSITE" id="PS50893">
    <property type="entry name" value="ABC_TRANSPORTER_2"/>
    <property type="match status" value="1"/>
</dbReference>
<proteinExistence type="evidence at protein level"/>
<accession>P45861</accession>
<name>YWJA_BACSU</name>
<gene>
    <name type="primary">ywjA</name>
    <name type="ordered locus">BSU37230</name>
</gene>